<dbReference type="EC" id="2.4.-.-"/>
<dbReference type="EMBL" id="AE010299">
    <property type="protein sequence ID" value="AAM03898.1"/>
    <property type="molecule type" value="Genomic_DNA"/>
</dbReference>
<dbReference type="RefSeq" id="WP_011020503.1">
    <property type="nucleotide sequence ID" value="NC_003552.1"/>
</dbReference>
<dbReference type="SMR" id="Q8TTI1"/>
<dbReference type="STRING" id="188937.MA_0452"/>
<dbReference type="CAZy" id="GT1">
    <property type="family name" value="Glycosyltransferase Family 1"/>
</dbReference>
<dbReference type="EnsemblBacteria" id="AAM03898">
    <property type="protein sequence ID" value="AAM03898"/>
    <property type="gene ID" value="MA_0452"/>
</dbReference>
<dbReference type="GeneID" id="1472344"/>
<dbReference type="KEGG" id="mac:MA_0452"/>
<dbReference type="HOGENOM" id="CLU_060247_0_0_2"/>
<dbReference type="InParanoid" id="Q8TTI1"/>
<dbReference type="OrthoDB" id="46222at2157"/>
<dbReference type="PhylomeDB" id="Q8TTI1"/>
<dbReference type="Proteomes" id="UP000002487">
    <property type="component" value="Chromosome"/>
</dbReference>
<dbReference type="GO" id="GO:0016757">
    <property type="term" value="F:glycosyltransferase activity"/>
    <property type="evidence" value="ECO:0000318"/>
    <property type="project" value="GO_Central"/>
</dbReference>
<dbReference type="GO" id="GO:0016758">
    <property type="term" value="F:hexosyltransferase activity"/>
    <property type="evidence" value="ECO:0007669"/>
    <property type="project" value="InterPro"/>
</dbReference>
<dbReference type="CDD" id="cd03785">
    <property type="entry name" value="GT28_MurG"/>
    <property type="match status" value="1"/>
</dbReference>
<dbReference type="Gene3D" id="3.40.50.2000">
    <property type="entry name" value="Glycogen Phosphorylase B"/>
    <property type="match status" value="2"/>
</dbReference>
<dbReference type="InterPro" id="IPR007235">
    <property type="entry name" value="Glyco_trans_28_C"/>
</dbReference>
<dbReference type="PANTHER" id="PTHR21015:SF22">
    <property type="entry name" value="GLYCOSYLTRANSFERASE"/>
    <property type="match status" value="1"/>
</dbReference>
<dbReference type="PANTHER" id="PTHR21015">
    <property type="entry name" value="UDP-N-ACETYLGLUCOSAMINE--N-ACETYLMURAMYL-(PENTAPEPTIDE) PYROPHOSPHORYL-UNDECAPRENOL N-ACETYLGLUCOSAMINE TRANSFERASE 1"/>
    <property type="match status" value="1"/>
</dbReference>
<dbReference type="Pfam" id="PF04101">
    <property type="entry name" value="Glyco_tran_28_C"/>
    <property type="match status" value="1"/>
</dbReference>
<dbReference type="Pfam" id="PF13528">
    <property type="entry name" value="Glyco_trans_1_3"/>
    <property type="match status" value="1"/>
</dbReference>
<dbReference type="SUPFAM" id="SSF53756">
    <property type="entry name" value="UDP-Glycosyltransferase/glycogen phosphorylase"/>
    <property type="match status" value="1"/>
</dbReference>
<reference key="1">
    <citation type="journal article" date="2002" name="Genome Res.">
        <title>The genome of Methanosarcina acetivorans reveals extensive metabolic and physiological diversity.</title>
        <authorList>
            <person name="Galagan J.E."/>
            <person name="Nusbaum C."/>
            <person name="Roy A."/>
            <person name="Endrizzi M.G."/>
            <person name="Macdonald P."/>
            <person name="FitzHugh W."/>
            <person name="Calvo S."/>
            <person name="Engels R."/>
            <person name="Smirnov S."/>
            <person name="Atnoor D."/>
            <person name="Brown A."/>
            <person name="Allen N."/>
            <person name="Naylor J."/>
            <person name="Stange-Thomann N."/>
            <person name="DeArellano K."/>
            <person name="Johnson R."/>
            <person name="Linton L."/>
            <person name="McEwan P."/>
            <person name="McKernan K."/>
            <person name="Talamas J."/>
            <person name="Tirrell A."/>
            <person name="Ye W."/>
            <person name="Zimmer A."/>
            <person name="Barber R.D."/>
            <person name="Cann I."/>
            <person name="Graham D.E."/>
            <person name="Grahame D.A."/>
            <person name="Guss A.M."/>
            <person name="Hedderich R."/>
            <person name="Ingram-Smith C."/>
            <person name="Kuettner H.C."/>
            <person name="Krzycki J.A."/>
            <person name="Leigh J.A."/>
            <person name="Li W."/>
            <person name="Liu J."/>
            <person name="Mukhopadhyay B."/>
            <person name="Reeve J.N."/>
            <person name="Smith K."/>
            <person name="Springer T.A."/>
            <person name="Umayam L.A."/>
            <person name="White O."/>
            <person name="White R.H."/>
            <person name="de Macario E.C."/>
            <person name="Ferry J.G."/>
            <person name="Jarrell K.F."/>
            <person name="Jing H."/>
            <person name="Macario A.J.L."/>
            <person name="Paulsen I.T."/>
            <person name="Pritchett M."/>
            <person name="Sowers K.R."/>
            <person name="Swanson R.V."/>
            <person name="Zinder S.H."/>
            <person name="Lander E."/>
            <person name="Metcalf W.W."/>
            <person name="Birren B."/>
        </authorList>
    </citation>
    <scope>NUCLEOTIDE SEQUENCE [LARGE SCALE GENOMIC DNA]</scope>
    <source>
        <strain>ATCC 35395 / DSM 2834 / JCM 12185 / C2A</strain>
    </source>
</reference>
<proteinExistence type="inferred from homology"/>
<sequence length="379" mass="42070">MKIMIFICGEGLGHTSRCLALGKELLNAGHEIKFGAYGYSKELVEKTGYTAQEIPSEIKLVGKAGSLDLTGSIEATLKSAQLLGGPKLLKLLREFKPDVVVSDSYYLGTLAAMVLKLPVYLIINQSNMEEFFKNRGVPVRIIGKLTKKFYKEVFEKTDKIIIPDYPLPYTVCRKNLNFAPKLRGKLFYSGPLVREKYEDIDSIPLEKPHVVSLIGGFGYREPIFRKVLTTAMLDPGINYTLISGPSLDPSKLGGVPKNVRILNFVEDTYPYIKSSDAVIAPGGHSTIMEALSFGVPILSFPDEGHSEQESNAAVVEEEGYGRMLSYSTPPEVILECIREVIEDEAYRNKVERLQRLSGELDGPKTIRKLLEKEIGKKAS</sequence>
<evidence type="ECO:0000305" key="1"/>
<keyword id="KW-0328">Glycosyltransferase</keyword>
<keyword id="KW-1185">Reference proteome</keyword>
<keyword id="KW-0808">Transferase</keyword>
<protein>
    <recommendedName>
        <fullName>Uncharacterized glycosyltransferase MA_0452</fullName>
        <ecNumber>2.4.-.-</ecNumber>
    </recommendedName>
</protein>
<gene>
    <name type="ordered locus">MA_0452</name>
</gene>
<accession>Q8TTI1</accession>
<comment type="similarity">
    <text evidence="1">Belongs to the glycosyltransferase 28 family.</text>
</comment>
<organism>
    <name type="scientific">Methanosarcina acetivorans (strain ATCC 35395 / DSM 2834 / JCM 12185 / C2A)</name>
    <dbReference type="NCBI Taxonomy" id="188937"/>
    <lineage>
        <taxon>Archaea</taxon>
        <taxon>Methanobacteriati</taxon>
        <taxon>Methanobacteriota</taxon>
        <taxon>Stenosarchaea group</taxon>
        <taxon>Methanomicrobia</taxon>
        <taxon>Methanosarcinales</taxon>
        <taxon>Methanosarcinaceae</taxon>
        <taxon>Methanosarcina</taxon>
    </lineage>
</organism>
<name>Y452_METAC</name>
<feature type="chain" id="PRO_0000215617" description="Uncharacterized glycosyltransferase MA_0452">
    <location>
        <begin position="1"/>
        <end position="379"/>
    </location>
</feature>